<name>APT_ECOSM</name>
<evidence type="ECO:0000255" key="1">
    <source>
        <dbReference type="HAMAP-Rule" id="MF_00004"/>
    </source>
</evidence>
<keyword id="KW-0963">Cytoplasm</keyword>
<keyword id="KW-0328">Glycosyltransferase</keyword>
<keyword id="KW-0660">Purine salvage</keyword>
<keyword id="KW-0808">Transferase</keyword>
<reference key="1">
    <citation type="journal article" date="2008" name="J. Bacteriol.">
        <title>Insights into the environmental resistance gene pool from the genome sequence of the multidrug-resistant environmental isolate Escherichia coli SMS-3-5.</title>
        <authorList>
            <person name="Fricke W.F."/>
            <person name="Wright M.S."/>
            <person name="Lindell A.H."/>
            <person name="Harkins D.M."/>
            <person name="Baker-Austin C."/>
            <person name="Ravel J."/>
            <person name="Stepanauskas R."/>
        </authorList>
    </citation>
    <scope>NUCLEOTIDE SEQUENCE [LARGE SCALE GENOMIC DNA]</scope>
    <source>
        <strain>SMS-3-5 / SECEC</strain>
    </source>
</reference>
<comment type="function">
    <text evidence="1">Catalyzes a salvage reaction resulting in the formation of AMP, that is energically less costly than de novo synthesis.</text>
</comment>
<comment type="catalytic activity">
    <reaction evidence="1">
        <text>AMP + diphosphate = 5-phospho-alpha-D-ribose 1-diphosphate + adenine</text>
        <dbReference type="Rhea" id="RHEA:16609"/>
        <dbReference type="ChEBI" id="CHEBI:16708"/>
        <dbReference type="ChEBI" id="CHEBI:33019"/>
        <dbReference type="ChEBI" id="CHEBI:58017"/>
        <dbReference type="ChEBI" id="CHEBI:456215"/>
        <dbReference type="EC" id="2.4.2.7"/>
    </reaction>
</comment>
<comment type="pathway">
    <text evidence="1">Purine metabolism; AMP biosynthesis via salvage pathway; AMP from adenine: step 1/1.</text>
</comment>
<comment type="subunit">
    <text evidence="1">Homodimer.</text>
</comment>
<comment type="subcellular location">
    <subcellularLocation>
        <location evidence="1">Cytoplasm</location>
    </subcellularLocation>
</comment>
<comment type="similarity">
    <text evidence="1">Belongs to the purine/pyrimidine phosphoribosyltransferase family.</text>
</comment>
<gene>
    <name evidence="1" type="primary">apt</name>
    <name type="ordered locus">EcSMS35_0512</name>
</gene>
<dbReference type="EC" id="2.4.2.7" evidence="1"/>
<dbReference type="EMBL" id="CP000970">
    <property type="protein sequence ID" value="ACB19648.1"/>
    <property type="molecule type" value="Genomic_DNA"/>
</dbReference>
<dbReference type="RefSeq" id="WP_000127356.1">
    <property type="nucleotide sequence ID" value="NC_010498.1"/>
</dbReference>
<dbReference type="SMR" id="B1LJM6"/>
<dbReference type="GeneID" id="93776981"/>
<dbReference type="KEGG" id="ecm:EcSMS35_0512"/>
<dbReference type="HOGENOM" id="CLU_063339_3_0_6"/>
<dbReference type="UniPathway" id="UPA00588">
    <property type="reaction ID" value="UER00646"/>
</dbReference>
<dbReference type="Proteomes" id="UP000007011">
    <property type="component" value="Chromosome"/>
</dbReference>
<dbReference type="GO" id="GO:0005737">
    <property type="term" value="C:cytoplasm"/>
    <property type="evidence" value="ECO:0007669"/>
    <property type="project" value="UniProtKB-SubCell"/>
</dbReference>
<dbReference type="GO" id="GO:0002055">
    <property type="term" value="F:adenine binding"/>
    <property type="evidence" value="ECO:0007669"/>
    <property type="project" value="TreeGrafter"/>
</dbReference>
<dbReference type="GO" id="GO:0003999">
    <property type="term" value="F:adenine phosphoribosyltransferase activity"/>
    <property type="evidence" value="ECO:0007669"/>
    <property type="project" value="UniProtKB-UniRule"/>
</dbReference>
<dbReference type="GO" id="GO:0016208">
    <property type="term" value="F:AMP binding"/>
    <property type="evidence" value="ECO:0007669"/>
    <property type="project" value="TreeGrafter"/>
</dbReference>
<dbReference type="GO" id="GO:0006168">
    <property type="term" value="P:adenine salvage"/>
    <property type="evidence" value="ECO:0007669"/>
    <property type="project" value="InterPro"/>
</dbReference>
<dbReference type="GO" id="GO:0044209">
    <property type="term" value="P:AMP salvage"/>
    <property type="evidence" value="ECO:0007669"/>
    <property type="project" value="UniProtKB-UniRule"/>
</dbReference>
<dbReference type="GO" id="GO:0006166">
    <property type="term" value="P:purine ribonucleoside salvage"/>
    <property type="evidence" value="ECO:0007669"/>
    <property type="project" value="UniProtKB-KW"/>
</dbReference>
<dbReference type="CDD" id="cd06223">
    <property type="entry name" value="PRTases_typeI"/>
    <property type="match status" value="1"/>
</dbReference>
<dbReference type="FunFam" id="3.40.50.2020:FF:000004">
    <property type="entry name" value="Adenine phosphoribosyltransferase"/>
    <property type="match status" value="1"/>
</dbReference>
<dbReference type="Gene3D" id="3.40.50.2020">
    <property type="match status" value="1"/>
</dbReference>
<dbReference type="HAMAP" id="MF_00004">
    <property type="entry name" value="Aden_phosphoribosyltr"/>
    <property type="match status" value="1"/>
</dbReference>
<dbReference type="InterPro" id="IPR005764">
    <property type="entry name" value="Ade_phspho_trans"/>
</dbReference>
<dbReference type="InterPro" id="IPR000836">
    <property type="entry name" value="PRibTrfase_dom"/>
</dbReference>
<dbReference type="InterPro" id="IPR029057">
    <property type="entry name" value="PRTase-like"/>
</dbReference>
<dbReference type="InterPro" id="IPR050054">
    <property type="entry name" value="UPRTase/APRTase"/>
</dbReference>
<dbReference type="NCBIfam" id="TIGR01090">
    <property type="entry name" value="apt"/>
    <property type="match status" value="1"/>
</dbReference>
<dbReference type="NCBIfam" id="NF002632">
    <property type="entry name" value="PRK02304.1-1"/>
    <property type="match status" value="1"/>
</dbReference>
<dbReference type="NCBIfam" id="NF002633">
    <property type="entry name" value="PRK02304.1-2"/>
    <property type="match status" value="1"/>
</dbReference>
<dbReference type="NCBIfam" id="NF002634">
    <property type="entry name" value="PRK02304.1-3"/>
    <property type="match status" value="1"/>
</dbReference>
<dbReference type="NCBIfam" id="NF002636">
    <property type="entry name" value="PRK02304.1-5"/>
    <property type="match status" value="1"/>
</dbReference>
<dbReference type="PANTHER" id="PTHR32315">
    <property type="entry name" value="ADENINE PHOSPHORIBOSYLTRANSFERASE"/>
    <property type="match status" value="1"/>
</dbReference>
<dbReference type="PANTHER" id="PTHR32315:SF3">
    <property type="entry name" value="ADENINE PHOSPHORIBOSYLTRANSFERASE"/>
    <property type="match status" value="1"/>
</dbReference>
<dbReference type="Pfam" id="PF00156">
    <property type="entry name" value="Pribosyltran"/>
    <property type="match status" value="1"/>
</dbReference>
<dbReference type="SUPFAM" id="SSF53271">
    <property type="entry name" value="PRTase-like"/>
    <property type="match status" value="1"/>
</dbReference>
<dbReference type="PROSITE" id="PS00103">
    <property type="entry name" value="PUR_PYR_PR_TRANSFER"/>
    <property type="match status" value="1"/>
</dbReference>
<organism>
    <name type="scientific">Escherichia coli (strain SMS-3-5 / SECEC)</name>
    <dbReference type="NCBI Taxonomy" id="439855"/>
    <lineage>
        <taxon>Bacteria</taxon>
        <taxon>Pseudomonadati</taxon>
        <taxon>Pseudomonadota</taxon>
        <taxon>Gammaproteobacteria</taxon>
        <taxon>Enterobacterales</taxon>
        <taxon>Enterobacteriaceae</taxon>
        <taxon>Escherichia</taxon>
    </lineage>
</organism>
<feature type="chain" id="PRO_1000116175" description="Adenine phosphoribosyltransferase">
    <location>
        <begin position="1"/>
        <end position="183"/>
    </location>
</feature>
<protein>
    <recommendedName>
        <fullName evidence="1">Adenine phosphoribosyltransferase</fullName>
        <shortName evidence="1">APRT</shortName>
        <ecNumber evidence="1">2.4.2.7</ecNumber>
    </recommendedName>
</protein>
<accession>B1LJM6</accession>
<sequence length="183" mass="19859">MTATAQQLEYLKNSIKSIQDYPKPGILFRDVTSLLEDPKAYALSIDLLVERYKNAGITKVVGTEARGFLFGAPVALGLGVGFVPVRKPGKLPRETISETYDLEYGTDQLEIHVDAIKPGDKVLVVDDLLATGGTIEATVKLIRRLGGEVADAAFIINLFDLGGEQRLEKQGITSYSLVPFPGH</sequence>
<proteinExistence type="inferred from homology"/>